<gene>
    <name type="primary">UL104</name>
</gene>
<feature type="chain" id="PRO_0000418268" description="Portal protein">
    <location>
        <begin position="1"/>
        <end position="697"/>
    </location>
</feature>
<feature type="region of interest" description="Disordered" evidence="2">
    <location>
        <begin position="633"/>
        <end position="697"/>
    </location>
</feature>
<feature type="compositionally biased region" description="Basic and acidic residues" evidence="2">
    <location>
        <begin position="664"/>
        <end position="689"/>
    </location>
</feature>
<reference key="1">
    <citation type="journal article" date="2004" name="J. Gen. Virol.">
        <title>Genetic content of wild-type human cytomegalovirus.</title>
        <authorList>
            <person name="Dolan A."/>
            <person name="Cunningham C."/>
            <person name="Hector R.D."/>
            <person name="Hassan-Walker A.F."/>
            <person name="Lee L."/>
            <person name="Addison C."/>
            <person name="Dargan D.J."/>
            <person name="McGeoch D.J."/>
            <person name="Gatherer D."/>
            <person name="Emery V.C."/>
            <person name="Griffiths P.D."/>
            <person name="Sinzger C."/>
            <person name="McSharry B.P."/>
            <person name="Wilkinson G.W.G."/>
            <person name="Davison A.J."/>
        </authorList>
    </citation>
    <scope>NUCLEOTIDE SEQUENCE [LARGE SCALE GENOMIC DNA]</scope>
</reference>
<sequence length="697" mass="78535">MERNHWNEKSSGAKRSRERDLTLSTIRSILAADERLRIKASSYLGVGRGVDDEAVIDIFPTGQTMSFLRLLHGFLGTCRGQSMHQVLRDPCVLRKQLLYGVCKTLFDTITVRRVAEEWKLHAALFPYRALDEEDLEQYLLVWSASLRQSVQTGVLGALRDILYQYADNDDYGLYVDWCVTVGLVPLLDVKTKPSEAAERAQFVRAAVQRATETHPLAQDLLQANLALLLQVAERLGAVRIANAPEVRVFKKVRSERLEAQLRGKHIRLYVAAEPLAYERDKLLFTTPVAHLHEEILRYDGLCRHQKICQLLNTFPVKVVTASRHELNCKKLVEMMEQHDRGSDAKKSIMKFLLNVSDSKSRIGIEDSVESFLQDLTPSLVDQNRLLPARGPGGPGVVGPGGAVVGGPAGHVGLLPPPPGPAAPERDIRDLFKKQVIKCLEEQIQSQVDEIQDLRTLNQTWENRVRELRDLLTRYASRREDSMSLGARDAELYHLPVLEAVRKARDAAPFRPLAVEDNRLVANSFFSQFVPGTESLERFLTQLWENEYFRTFRLRRLVTHQGAEEAIVYSNYTVERVTLPYLCHILALGTLDPVPEAYLQLSFGEIVAAAYDDSKFCRYVELICSREKARRRQMSREAAGGVPERGTASSGGPGTLERSAPRRLITADEERRGPERVGRFRNGGPDDPRRAGGPYGFH</sequence>
<proteinExistence type="inferred from homology"/>
<keyword id="KW-0175">Coiled coil</keyword>
<keyword id="KW-1048">Host nucleus</keyword>
<keyword id="KW-1185">Reference proteome</keyword>
<keyword id="KW-0231">Viral genome packaging</keyword>
<keyword id="KW-1188">Viral release from host cell</keyword>
<keyword id="KW-0946">Virion</keyword>
<accession>F5HBR4</accession>
<evidence type="ECO:0000255" key="1">
    <source>
        <dbReference type="HAMAP-Rule" id="MF_04012"/>
    </source>
</evidence>
<evidence type="ECO:0000256" key="2">
    <source>
        <dbReference type="SAM" id="MobiDB-lite"/>
    </source>
</evidence>
<organismHost>
    <name type="scientific">Homo sapiens</name>
    <name type="common">Human</name>
    <dbReference type="NCBI Taxonomy" id="9606"/>
</organismHost>
<dbReference type="EMBL" id="AY446894">
    <property type="protein sequence ID" value="AAR31654.1"/>
    <property type="molecule type" value="Genomic_DNA"/>
</dbReference>
<dbReference type="RefSeq" id="YP_081550.1">
    <property type="nucleotide sequence ID" value="NC_006273.2"/>
</dbReference>
<dbReference type="SMR" id="F5HBR4"/>
<dbReference type="GeneID" id="3077547"/>
<dbReference type="KEGG" id="vg:3077547"/>
<dbReference type="Reactome" id="R-HSA-9609690">
    <property type="pathway name" value="HCMV Early Events"/>
</dbReference>
<dbReference type="Reactome" id="R-HSA-9610379">
    <property type="pathway name" value="HCMV Late Events"/>
</dbReference>
<dbReference type="Proteomes" id="UP000000938">
    <property type="component" value="Segment"/>
</dbReference>
<dbReference type="GO" id="GO:0042025">
    <property type="term" value="C:host cell nucleus"/>
    <property type="evidence" value="ECO:0007669"/>
    <property type="project" value="UniProtKB-SubCell"/>
</dbReference>
<dbReference type="GO" id="GO:0019028">
    <property type="term" value="C:viral capsid"/>
    <property type="evidence" value="ECO:0000304"/>
    <property type="project" value="Reactome"/>
</dbReference>
<dbReference type="GO" id="GO:0051276">
    <property type="term" value="P:chromosome organization"/>
    <property type="evidence" value="ECO:0007669"/>
    <property type="project" value="InterPro"/>
</dbReference>
<dbReference type="HAMAP" id="MF_04012">
    <property type="entry name" value="HSV_PORTL"/>
    <property type="match status" value="1"/>
</dbReference>
<dbReference type="InterPro" id="IPR002660">
    <property type="entry name" value="Herpes_Portal"/>
</dbReference>
<dbReference type="Pfam" id="PF01763">
    <property type="entry name" value="Herpes_UL6"/>
    <property type="match status" value="1"/>
</dbReference>
<protein>
    <recommendedName>
        <fullName evidence="1">Portal protein</fullName>
    </recommendedName>
</protein>
<organism>
    <name type="scientific">Human cytomegalovirus (strain Merlin)</name>
    <name type="common">HHV-5</name>
    <name type="synonym">Human herpesvirus 5</name>
    <dbReference type="NCBI Taxonomy" id="295027"/>
    <lineage>
        <taxon>Viruses</taxon>
        <taxon>Duplodnaviria</taxon>
        <taxon>Heunggongvirae</taxon>
        <taxon>Peploviricota</taxon>
        <taxon>Herviviricetes</taxon>
        <taxon>Herpesvirales</taxon>
        <taxon>Orthoherpesviridae</taxon>
        <taxon>Betaherpesvirinae</taxon>
        <taxon>Cytomegalovirus</taxon>
        <taxon>Cytomegalovirus humanbeta5</taxon>
        <taxon>Human cytomegalovirus</taxon>
    </lineage>
</organism>
<comment type="function">
    <text evidence="1">Forms a portal in the viral capsid through which viral DNA is translocated during DNA packaging. Assembles as a dodecamer at a single fivefold axe of the T=16 icosahedric capsid. Binds to the molecular motor that translocates the viral DNA, termed terminase.</text>
</comment>
<comment type="subunit">
    <text evidence="1">Homododecamerizes. Interacts with terminase subunits TRM1 and TRM3.</text>
</comment>
<comment type="subcellular location">
    <subcellularLocation>
        <location evidence="1">Virion</location>
    </subcellularLocation>
    <subcellularLocation>
        <location evidence="1">Host nucleus</location>
    </subcellularLocation>
</comment>
<comment type="similarity">
    <text evidence="1">Belongs to the herpesviridae portal protein family.</text>
</comment>
<name>PORTL_HCMVM</name>